<keyword id="KW-0210">Decarboxylase</keyword>
<keyword id="KW-0456">Lyase</keyword>
<keyword id="KW-0663">Pyridoxal phosphate</keyword>
<feature type="chain" id="PRO_0000147025" description="Probable L-tyrosine/L-aspartate decarboxylase">
    <location>
        <begin position="1"/>
        <end position="398"/>
    </location>
</feature>
<feature type="modified residue" description="N6-(pyridoxal phosphate)lysine" evidence="1">
    <location>
        <position position="242"/>
    </location>
</feature>
<organism>
    <name type="scientific">Methanosarcina mazei (strain ATCC BAA-159 / DSM 3647 / Goe1 / Go1 / JCM 11833 / OCM 88)</name>
    <name type="common">Methanosarcina frisia</name>
    <dbReference type="NCBI Taxonomy" id="192952"/>
    <lineage>
        <taxon>Archaea</taxon>
        <taxon>Methanobacteriati</taxon>
        <taxon>Methanobacteriota</taxon>
        <taxon>Stenosarchaea group</taxon>
        <taxon>Methanomicrobia</taxon>
        <taxon>Methanosarcinales</taxon>
        <taxon>Methanosarcinaceae</taxon>
        <taxon>Methanosarcina</taxon>
    </lineage>
</organism>
<comment type="function">
    <text evidence="1">Catalyzes the decarboxylation of L-tyrosine to produce tyramine for methanofuran biosynthesis. Can also catalyze the decarboxylation of L-aspartate to produce beta-alanine for coenzyme A (CoA) biosynthesis.</text>
</comment>
<comment type="catalytic activity">
    <reaction evidence="1">
        <text>L-tyrosine + H(+) = tyramine + CO2</text>
        <dbReference type="Rhea" id="RHEA:14345"/>
        <dbReference type="ChEBI" id="CHEBI:15378"/>
        <dbReference type="ChEBI" id="CHEBI:16526"/>
        <dbReference type="ChEBI" id="CHEBI:58315"/>
        <dbReference type="ChEBI" id="CHEBI:327995"/>
        <dbReference type="EC" id="4.1.1.25"/>
    </reaction>
</comment>
<comment type="catalytic activity">
    <reaction evidence="1">
        <text>L-aspartate + H(+) = beta-alanine + CO2</text>
        <dbReference type="Rhea" id="RHEA:19497"/>
        <dbReference type="ChEBI" id="CHEBI:15378"/>
        <dbReference type="ChEBI" id="CHEBI:16526"/>
        <dbReference type="ChEBI" id="CHEBI:29991"/>
        <dbReference type="ChEBI" id="CHEBI:57966"/>
        <dbReference type="EC" id="4.1.1.11"/>
    </reaction>
</comment>
<comment type="cofactor">
    <cofactor evidence="1">
        <name>pyridoxal 5'-phosphate</name>
        <dbReference type="ChEBI" id="CHEBI:597326"/>
    </cofactor>
</comment>
<comment type="pathway">
    <text evidence="1">Cofactor biosynthesis; methanofuran biosynthesis.</text>
</comment>
<comment type="pathway">
    <text evidence="1">Cofactor biosynthesis; coenzyme A biosynthesis.</text>
</comment>
<comment type="similarity">
    <text evidence="1">Belongs to the group II decarboxylase family. MfnA subfamily.</text>
</comment>
<sequence length="398" mass="43761">MNEQGLSEREIFSYLENAKSEDTDYYRVFSSMCTRPHKIAIEANRLFIEANLGDLGLFAGAHKLEQEVVRMLGNLLHASSIDVPSGGLCQSSVCGYLTTGGTESNIQAVRGMKNLVTAGKKEFKGTPNIVIPASAHFSFDKVADMMGIEVRRASLDSEFRVDMASVEKLINENTIGLVGIAGNTEFGQIDPIDKLSEVALENELFLHVDAAFGGFVIPFLEKPQPFDFKVPGVTSIAIDPHKMGLSTIPSGALLFRSPSFLDSLKVSTPYLTTKSQFTLTGTRSGASAAATCAVMKYLGYEGYRKNVQYCMELTSKIVEEARKLGFEPLIEPVMNVVALKVPNPDLVRERLLKKFGWNVSITRTPRALRLVLMPHNSPEDIELFLEDLKKVTAEIKSP</sequence>
<gene>
    <name evidence="1" type="primary">mfnA</name>
    <name type="ordered locus">MM_1317</name>
</gene>
<dbReference type="EC" id="4.1.1.11" evidence="1"/>
<dbReference type="EC" id="4.1.1.25" evidence="1"/>
<dbReference type="EMBL" id="AE008384">
    <property type="protein sequence ID" value="AAM31013.1"/>
    <property type="molecule type" value="Genomic_DNA"/>
</dbReference>
<dbReference type="RefSeq" id="WP_011033263.1">
    <property type="nucleotide sequence ID" value="NC_003901.1"/>
</dbReference>
<dbReference type="SMR" id="Q8PXA5"/>
<dbReference type="GeneID" id="24866535"/>
<dbReference type="KEGG" id="mma:MM_1317"/>
<dbReference type="PATRIC" id="fig|192952.21.peg.1529"/>
<dbReference type="eggNOG" id="arCOG00027">
    <property type="taxonomic scope" value="Archaea"/>
</dbReference>
<dbReference type="HOGENOM" id="CLU_028929_2_1_2"/>
<dbReference type="UniPathway" id="UPA00080"/>
<dbReference type="UniPathway" id="UPA00241"/>
<dbReference type="Proteomes" id="UP000000595">
    <property type="component" value="Chromosome"/>
</dbReference>
<dbReference type="GO" id="GO:0004068">
    <property type="term" value="F:aspartate 1-decarboxylase activity"/>
    <property type="evidence" value="ECO:0007669"/>
    <property type="project" value="UniProtKB-UniRule"/>
</dbReference>
<dbReference type="GO" id="GO:0030170">
    <property type="term" value="F:pyridoxal phosphate binding"/>
    <property type="evidence" value="ECO:0007669"/>
    <property type="project" value="UniProtKB-UniRule"/>
</dbReference>
<dbReference type="GO" id="GO:0004837">
    <property type="term" value="F:tyrosine decarboxylase activity"/>
    <property type="evidence" value="ECO:0007669"/>
    <property type="project" value="UniProtKB-UniRule"/>
</dbReference>
<dbReference type="GO" id="GO:0019752">
    <property type="term" value="P:carboxylic acid metabolic process"/>
    <property type="evidence" value="ECO:0007669"/>
    <property type="project" value="InterPro"/>
</dbReference>
<dbReference type="GO" id="GO:0015937">
    <property type="term" value="P:coenzyme A biosynthetic process"/>
    <property type="evidence" value="ECO:0007669"/>
    <property type="project" value="UniProtKB-UniRule"/>
</dbReference>
<dbReference type="GO" id="GO:2001120">
    <property type="term" value="P:methanofuran biosynthetic process"/>
    <property type="evidence" value="ECO:0007669"/>
    <property type="project" value="UniProtKB-UniRule"/>
</dbReference>
<dbReference type="FunFam" id="3.40.640.10:FF:000125">
    <property type="entry name" value="Probable L-tyrosine/L-aspartate decarboxylase"/>
    <property type="match status" value="1"/>
</dbReference>
<dbReference type="Gene3D" id="3.90.1150.10">
    <property type="entry name" value="Aspartate Aminotransferase, domain 1"/>
    <property type="match status" value="1"/>
</dbReference>
<dbReference type="Gene3D" id="3.40.640.10">
    <property type="entry name" value="Type I PLP-dependent aspartate aminotransferase-like (Major domain)"/>
    <property type="match status" value="1"/>
</dbReference>
<dbReference type="HAMAP" id="MF_01610">
    <property type="entry name" value="MfnA_decarbox"/>
    <property type="match status" value="1"/>
</dbReference>
<dbReference type="InterPro" id="IPR050477">
    <property type="entry name" value="GrpII_AminoAcid_Decarb"/>
</dbReference>
<dbReference type="InterPro" id="IPR020931">
    <property type="entry name" value="MfnA"/>
</dbReference>
<dbReference type="InterPro" id="IPR002129">
    <property type="entry name" value="PyrdxlP-dep_de-COase"/>
</dbReference>
<dbReference type="InterPro" id="IPR015424">
    <property type="entry name" value="PyrdxlP-dep_Trfase"/>
</dbReference>
<dbReference type="InterPro" id="IPR015421">
    <property type="entry name" value="PyrdxlP-dep_Trfase_major"/>
</dbReference>
<dbReference type="InterPro" id="IPR015422">
    <property type="entry name" value="PyrdxlP-dep_Trfase_small"/>
</dbReference>
<dbReference type="NCBIfam" id="TIGR03812">
    <property type="entry name" value="tyr_de_CO2_Arch"/>
    <property type="match status" value="1"/>
</dbReference>
<dbReference type="PANTHER" id="PTHR42735">
    <property type="match status" value="1"/>
</dbReference>
<dbReference type="PANTHER" id="PTHR42735:SF6">
    <property type="entry name" value="SPHINGOSINE-1-PHOSPHATE LYASE 1"/>
    <property type="match status" value="1"/>
</dbReference>
<dbReference type="Pfam" id="PF00282">
    <property type="entry name" value="Pyridoxal_deC"/>
    <property type="match status" value="1"/>
</dbReference>
<dbReference type="SUPFAM" id="SSF53383">
    <property type="entry name" value="PLP-dependent transferases"/>
    <property type="match status" value="1"/>
</dbReference>
<reference key="1">
    <citation type="journal article" date="2002" name="J. Mol. Microbiol. Biotechnol.">
        <title>The genome of Methanosarcina mazei: evidence for lateral gene transfer between Bacteria and Archaea.</title>
        <authorList>
            <person name="Deppenmeier U."/>
            <person name="Johann A."/>
            <person name="Hartsch T."/>
            <person name="Merkl R."/>
            <person name="Schmitz R.A."/>
            <person name="Martinez-Arias R."/>
            <person name="Henne A."/>
            <person name="Wiezer A."/>
            <person name="Baeumer S."/>
            <person name="Jacobi C."/>
            <person name="Brueggemann H."/>
            <person name="Lienard T."/>
            <person name="Christmann A."/>
            <person name="Boemecke M."/>
            <person name="Steckel S."/>
            <person name="Bhattacharyya A."/>
            <person name="Lykidis A."/>
            <person name="Overbeek R."/>
            <person name="Klenk H.-P."/>
            <person name="Gunsalus R.P."/>
            <person name="Fritz H.-J."/>
            <person name="Gottschalk G."/>
        </authorList>
    </citation>
    <scope>NUCLEOTIDE SEQUENCE [LARGE SCALE GENOMIC DNA]</scope>
    <source>
        <strain>ATCC BAA-159 / DSM 3647 / Goe1 / Go1 / JCM 11833 / OCM 88</strain>
    </source>
</reference>
<evidence type="ECO:0000255" key="1">
    <source>
        <dbReference type="HAMAP-Rule" id="MF_01610"/>
    </source>
</evidence>
<protein>
    <recommendedName>
        <fullName evidence="1">Probable L-tyrosine/L-aspartate decarboxylase</fullName>
        <shortName evidence="1">TDC/ADC</shortName>
        <ecNumber evidence="1">4.1.1.11</ecNumber>
        <ecNumber evidence="1">4.1.1.25</ecNumber>
    </recommendedName>
</protein>
<name>MFNA_METMA</name>
<proteinExistence type="inferred from homology"/>
<accession>Q8PXA5</accession>